<evidence type="ECO:0000255" key="1">
    <source>
        <dbReference type="HAMAP-Rule" id="MF_00918"/>
    </source>
</evidence>
<organism>
    <name type="scientific">Escherichia coli O6:H1 (strain CFT073 / ATCC 700928 / UPEC)</name>
    <dbReference type="NCBI Taxonomy" id="199310"/>
    <lineage>
        <taxon>Bacteria</taxon>
        <taxon>Pseudomonadati</taxon>
        <taxon>Pseudomonadota</taxon>
        <taxon>Gammaproteobacteria</taxon>
        <taxon>Enterobacterales</taxon>
        <taxon>Enterobacteriaceae</taxon>
        <taxon>Escherichia</taxon>
    </lineage>
</organism>
<reference key="1">
    <citation type="journal article" date="2002" name="Proc. Natl. Acad. Sci. U.S.A.">
        <title>Extensive mosaic structure revealed by the complete genome sequence of uropathogenic Escherichia coli.</title>
        <authorList>
            <person name="Welch R.A."/>
            <person name="Burland V."/>
            <person name="Plunkett G. III"/>
            <person name="Redford P."/>
            <person name="Roesch P."/>
            <person name="Rasko D."/>
            <person name="Buckles E.L."/>
            <person name="Liou S.-R."/>
            <person name="Boutin A."/>
            <person name="Hackett J."/>
            <person name="Stroud D."/>
            <person name="Mayhew G.F."/>
            <person name="Rose D.J."/>
            <person name="Zhou S."/>
            <person name="Schwartz D.C."/>
            <person name="Perna N.T."/>
            <person name="Mobley H.L.T."/>
            <person name="Donnenberg M.S."/>
            <person name="Blattner F.R."/>
        </authorList>
    </citation>
    <scope>NUCLEOTIDE SEQUENCE [LARGE SCALE GENOMIC DNA]</scope>
    <source>
        <strain>CFT073 / ATCC 700928 / UPEC</strain>
    </source>
</reference>
<name>YEEN_ECOL6</name>
<protein>
    <recommendedName>
        <fullName evidence="1">Probable transcriptional regulatory protein YeeN</fullName>
    </recommendedName>
</protein>
<feature type="chain" id="PRO_0000175804" description="Probable transcriptional regulatory protein YeeN">
    <location>
        <begin position="1"/>
        <end position="238"/>
    </location>
</feature>
<proteinExistence type="inferred from homology"/>
<sequence length="238" mass="25867">MGRKWANIVAKKTAKDGATSKIYAKFGVEIYAAAKQGEPDPELNTSLKFVIERAKQAQVPKHVIDKAIDKAKGGGDETFVQGRYEGFGPNGSMIIAETLTSNVNRTIANVRTIFNKKGGNIGAAGSVSYMFDNTGVIVFKGTDPDHIFEILLEAEVDVRDVTEEEGNIVIYTEPTDLHKGIAALKAAGITEFSTTELEMIAQSEVELSPEDLEIFEGLVDALEDDDDVQKVYHNVANL</sequence>
<gene>
    <name evidence="1" type="primary">yeeN</name>
    <name type="ordered locus">c2445</name>
</gene>
<accession>P0A8A3</accession>
<accession>P76351</accession>
<accession>P94751</accession>
<keyword id="KW-0963">Cytoplasm</keyword>
<keyword id="KW-0238">DNA-binding</keyword>
<keyword id="KW-1185">Reference proteome</keyword>
<keyword id="KW-0804">Transcription</keyword>
<keyword id="KW-0805">Transcription regulation</keyword>
<comment type="subcellular location">
    <subcellularLocation>
        <location evidence="1">Cytoplasm</location>
    </subcellularLocation>
</comment>
<comment type="similarity">
    <text evidence="1">Belongs to the TACO1 family. YeeN subfamily.</text>
</comment>
<dbReference type="EMBL" id="AE014075">
    <property type="protein sequence ID" value="AAN80904.1"/>
    <property type="molecule type" value="Genomic_DNA"/>
</dbReference>
<dbReference type="RefSeq" id="WP_000532923.1">
    <property type="nucleotide sequence ID" value="NZ_CP051263.1"/>
</dbReference>
<dbReference type="SMR" id="P0A8A3"/>
<dbReference type="STRING" id="199310.c2445"/>
<dbReference type="KEGG" id="ecc:c2445"/>
<dbReference type="eggNOG" id="COG0217">
    <property type="taxonomic scope" value="Bacteria"/>
</dbReference>
<dbReference type="HOGENOM" id="CLU_062974_2_0_6"/>
<dbReference type="BioCyc" id="ECOL199310:C2445-MONOMER"/>
<dbReference type="Proteomes" id="UP000001410">
    <property type="component" value="Chromosome"/>
</dbReference>
<dbReference type="GO" id="GO:0005829">
    <property type="term" value="C:cytosol"/>
    <property type="evidence" value="ECO:0007669"/>
    <property type="project" value="TreeGrafter"/>
</dbReference>
<dbReference type="GO" id="GO:0003677">
    <property type="term" value="F:DNA binding"/>
    <property type="evidence" value="ECO:0007669"/>
    <property type="project" value="UniProtKB-UniRule"/>
</dbReference>
<dbReference type="GO" id="GO:0006355">
    <property type="term" value="P:regulation of DNA-templated transcription"/>
    <property type="evidence" value="ECO:0007669"/>
    <property type="project" value="UniProtKB-UniRule"/>
</dbReference>
<dbReference type="FunFam" id="1.10.10.200:FF:000003">
    <property type="entry name" value="Probable transcriptional regulatory protein YeeN"/>
    <property type="match status" value="1"/>
</dbReference>
<dbReference type="FunFam" id="3.30.70.980:FF:000004">
    <property type="entry name" value="Probable transcriptional regulatory protein YeeN"/>
    <property type="match status" value="1"/>
</dbReference>
<dbReference type="Gene3D" id="1.10.10.200">
    <property type="match status" value="1"/>
</dbReference>
<dbReference type="Gene3D" id="3.30.70.980">
    <property type="match status" value="2"/>
</dbReference>
<dbReference type="HAMAP" id="MF_00693">
    <property type="entry name" value="Transcrip_reg_TACO1"/>
    <property type="match status" value="1"/>
</dbReference>
<dbReference type="HAMAP" id="MF_00918">
    <property type="entry name" value="Transcrip_reg_TACO1_YeeN"/>
    <property type="match status" value="1"/>
</dbReference>
<dbReference type="InterPro" id="IPR017856">
    <property type="entry name" value="Integrase-like_N"/>
</dbReference>
<dbReference type="InterPro" id="IPR048300">
    <property type="entry name" value="TACO1_YebC-like_2nd/3rd_dom"/>
</dbReference>
<dbReference type="InterPro" id="IPR049083">
    <property type="entry name" value="TACO1_YebC_N"/>
</dbReference>
<dbReference type="InterPro" id="IPR002876">
    <property type="entry name" value="Transcrip_reg_TACO1-like"/>
</dbReference>
<dbReference type="InterPro" id="IPR026564">
    <property type="entry name" value="Transcrip_reg_TACO1-like_dom3"/>
</dbReference>
<dbReference type="InterPro" id="IPR026562">
    <property type="entry name" value="Transcrip_reg_TACO1_YeeN"/>
</dbReference>
<dbReference type="InterPro" id="IPR029072">
    <property type="entry name" value="YebC-like"/>
</dbReference>
<dbReference type="NCBIfam" id="NF009044">
    <property type="entry name" value="PRK12378.1"/>
    <property type="match status" value="1"/>
</dbReference>
<dbReference type="NCBIfam" id="TIGR01033">
    <property type="entry name" value="YebC/PmpR family DNA-binding transcriptional regulator"/>
    <property type="match status" value="1"/>
</dbReference>
<dbReference type="PANTHER" id="PTHR12532">
    <property type="entry name" value="TRANSLATIONAL ACTIVATOR OF CYTOCHROME C OXIDASE 1"/>
    <property type="match status" value="1"/>
</dbReference>
<dbReference type="PANTHER" id="PTHR12532:SF0">
    <property type="entry name" value="TRANSLATIONAL ACTIVATOR OF CYTOCHROME C OXIDASE 1"/>
    <property type="match status" value="1"/>
</dbReference>
<dbReference type="Pfam" id="PF20772">
    <property type="entry name" value="TACO1_YebC_N"/>
    <property type="match status" value="1"/>
</dbReference>
<dbReference type="Pfam" id="PF01709">
    <property type="entry name" value="Transcrip_reg"/>
    <property type="match status" value="1"/>
</dbReference>
<dbReference type="SUPFAM" id="SSF75625">
    <property type="entry name" value="YebC-like"/>
    <property type="match status" value="1"/>
</dbReference>